<accession>D3ZT37</accession>
<sequence>MQRSCNEKEGKPKCSEPKREEEHPYGAFEGQRLEGNFRQRLLQSLEEFKEDIDYRHFKGEEMTGEEEEMERCLEEIRSLRKKFRALHSNRTHSRDRPF</sequence>
<dbReference type="EMBL" id="CH474117">
    <property type="protein sequence ID" value="EDL85806.1"/>
    <property type="molecule type" value="Genomic_DNA"/>
</dbReference>
<dbReference type="RefSeq" id="NP_001102871.1">
    <property type="nucleotide sequence ID" value="NM_001109401.1"/>
</dbReference>
<dbReference type="RefSeq" id="XP_006257341.1">
    <property type="nucleotide sequence ID" value="XM_006257279.5"/>
</dbReference>
<dbReference type="RefSeq" id="XP_006257342.1">
    <property type="nucleotide sequence ID" value="XM_006257280.5"/>
</dbReference>
<dbReference type="RefSeq" id="XP_008771659.1">
    <property type="nucleotide sequence ID" value="XM_008773437.3"/>
</dbReference>
<dbReference type="SMR" id="D3ZT37"/>
<dbReference type="FunCoup" id="D3ZT37">
    <property type="interactions" value="25"/>
</dbReference>
<dbReference type="STRING" id="10116.ENSRNOP00000042856"/>
<dbReference type="PaxDb" id="10116-ENSRNOP00000042856"/>
<dbReference type="Ensembl" id="ENSRNOT00000046091.6">
    <property type="protein sequence ID" value="ENSRNOP00000042856.3"/>
    <property type="gene ID" value="ENSRNOG00000037645.5"/>
</dbReference>
<dbReference type="GeneID" id="680319"/>
<dbReference type="KEGG" id="rno:680319"/>
<dbReference type="AGR" id="RGD:1593009"/>
<dbReference type="CTD" id="56849"/>
<dbReference type="RGD" id="1593009">
    <property type="gene designation" value="Tceal7"/>
</dbReference>
<dbReference type="eggNOG" id="ENOG502TCAG">
    <property type="taxonomic scope" value="Eukaryota"/>
</dbReference>
<dbReference type="GeneTree" id="ENSGT00950000183164"/>
<dbReference type="HOGENOM" id="CLU_181913_0_0_1"/>
<dbReference type="InParanoid" id="D3ZT37"/>
<dbReference type="OMA" id="DYRHFKG"/>
<dbReference type="OrthoDB" id="9510281at2759"/>
<dbReference type="PhylomeDB" id="D3ZT37"/>
<dbReference type="PRO" id="PR:D3ZT37"/>
<dbReference type="Proteomes" id="UP000002494">
    <property type="component" value="Chromosome X"/>
</dbReference>
<dbReference type="Proteomes" id="UP000234681">
    <property type="component" value="Chromosome x"/>
</dbReference>
<dbReference type="Bgee" id="ENSRNOG00000037645">
    <property type="expression patterns" value="Expressed in quadriceps femoris and 8 other cell types or tissues"/>
</dbReference>
<dbReference type="GO" id="GO:0005634">
    <property type="term" value="C:nucleus"/>
    <property type="evidence" value="ECO:0000250"/>
    <property type="project" value="UniProtKB"/>
</dbReference>
<dbReference type="GO" id="GO:0045892">
    <property type="term" value="P:negative regulation of DNA-templated transcription"/>
    <property type="evidence" value="ECO:0000250"/>
    <property type="project" value="UniProtKB"/>
</dbReference>
<dbReference type="GO" id="GO:0032088">
    <property type="term" value="P:negative regulation of NF-kappaB transcription factor activity"/>
    <property type="evidence" value="ECO:0000250"/>
    <property type="project" value="UniProtKB"/>
</dbReference>
<dbReference type="InterPro" id="IPR021156">
    <property type="entry name" value="TF_A-like/BEX"/>
</dbReference>
<dbReference type="Pfam" id="PF04538">
    <property type="entry name" value="BEX"/>
    <property type="match status" value="1"/>
</dbReference>
<name>TCAL7_RAT</name>
<keyword id="KW-0175">Coiled coil</keyword>
<keyword id="KW-0539">Nucleus</keyword>
<keyword id="KW-1185">Reference proteome</keyword>
<keyword id="KW-0678">Repressor</keyword>
<keyword id="KW-0804">Transcription</keyword>
<keyword id="KW-0805">Transcription regulation</keyword>
<comment type="function">
    <text evidence="1">Plays a role in the negative regulation of NF-kappa-B signaling at the basal level by modulating transcriptional activity of NF-kappa-B on its target gene promoters. Associates with cyclin D1 promoter containing Myc E-box sequence and transcriptionally represses cyclin D1 expression. Regulates telomerase reverse transcriptase expression and telomerase activity in both ALT (alternative lengthening of telomeres)and telomerase-positive cell lines (By similarity).</text>
</comment>
<comment type="subcellular location">
    <subcellularLocation>
        <location evidence="1">Nucleus</location>
    </subcellularLocation>
</comment>
<comment type="similarity">
    <text evidence="4">Belongs to the TFS-II family. TFA subfamily.</text>
</comment>
<evidence type="ECO:0000250" key="1"/>
<evidence type="ECO:0000255" key="2"/>
<evidence type="ECO:0000256" key="3">
    <source>
        <dbReference type="SAM" id="MobiDB-lite"/>
    </source>
</evidence>
<evidence type="ECO:0000305" key="4"/>
<protein>
    <recommendedName>
        <fullName>Transcription elongation factor A protein-like 7</fullName>
        <shortName>TCEA-like protein 7</shortName>
    </recommendedName>
    <alternativeName>
        <fullName>Transcription elongation factor S-II protein-like 7</fullName>
    </alternativeName>
</protein>
<gene>
    <name type="primary">Tceal7</name>
</gene>
<proteinExistence type="inferred from homology"/>
<organism>
    <name type="scientific">Rattus norvegicus</name>
    <name type="common">Rat</name>
    <dbReference type="NCBI Taxonomy" id="10116"/>
    <lineage>
        <taxon>Eukaryota</taxon>
        <taxon>Metazoa</taxon>
        <taxon>Chordata</taxon>
        <taxon>Craniata</taxon>
        <taxon>Vertebrata</taxon>
        <taxon>Euteleostomi</taxon>
        <taxon>Mammalia</taxon>
        <taxon>Eutheria</taxon>
        <taxon>Euarchontoglires</taxon>
        <taxon>Glires</taxon>
        <taxon>Rodentia</taxon>
        <taxon>Myomorpha</taxon>
        <taxon>Muroidea</taxon>
        <taxon>Muridae</taxon>
        <taxon>Murinae</taxon>
        <taxon>Rattus</taxon>
    </lineage>
</organism>
<reference key="1">
    <citation type="submission" date="2005-07" db="EMBL/GenBank/DDBJ databases">
        <authorList>
            <person name="Mural R.J."/>
            <person name="Adams M.D."/>
            <person name="Myers E.W."/>
            <person name="Smith H.O."/>
            <person name="Venter J.C."/>
        </authorList>
    </citation>
    <scope>NUCLEOTIDE SEQUENCE [LARGE SCALE GENOMIC DNA]</scope>
</reference>
<feature type="chain" id="PRO_0000404651" description="Transcription elongation factor A protein-like 7">
    <location>
        <begin position="1"/>
        <end position="98"/>
    </location>
</feature>
<feature type="region of interest" description="Disordered" evidence="3">
    <location>
        <begin position="1"/>
        <end position="31"/>
    </location>
</feature>
<feature type="coiled-coil region" evidence="2">
    <location>
        <begin position="59"/>
        <end position="89"/>
    </location>
</feature>
<feature type="compositionally biased region" description="Basic and acidic residues" evidence="3">
    <location>
        <begin position="1"/>
        <end position="24"/>
    </location>
</feature>